<reference key="1">
    <citation type="journal article" date="2006" name="PLoS Genet.">
        <title>Comparative genomics of emerging human ehrlichiosis agents.</title>
        <authorList>
            <person name="Dunning Hotopp J.C."/>
            <person name="Lin M."/>
            <person name="Madupu R."/>
            <person name="Crabtree J."/>
            <person name="Angiuoli S.V."/>
            <person name="Eisen J.A."/>
            <person name="Seshadri R."/>
            <person name="Ren Q."/>
            <person name="Wu M."/>
            <person name="Utterback T.R."/>
            <person name="Smith S."/>
            <person name="Lewis M."/>
            <person name="Khouri H."/>
            <person name="Zhang C."/>
            <person name="Niu H."/>
            <person name="Lin Q."/>
            <person name="Ohashi N."/>
            <person name="Zhi N."/>
            <person name="Nelson W.C."/>
            <person name="Brinkac L.M."/>
            <person name="Dodson R.J."/>
            <person name="Rosovitz M.J."/>
            <person name="Sundaram J.P."/>
            <person name="Daugherty S.C."/>
            <person name="Davidsen T."/>
            <person name="Durkin A.S."/>
            <person name="Gwinn M.L."/>
            <person name="Haft D.H."/>
            <person name="Selengut J.D."/>
            <person name="Sullivan S.A."/>
            <person name="Zafar N."/>
            <person name="Zhou L."/>
            <person name="Benahmed F."/>
            <person name="Forberger H."/>
            <person name="Halpin R."/>
            <person name="Mulligan S."/>
            <person name="Robinson J."/>
            <person name="White O."/>
            <person name="Rikihisa Y."/>
            <person name="Tettelin H."/>
        </authorList>
    </citation>
    <scope>NUCLEOTIDE SEQUENCE [LARGE SCALE GENOMIC DNA]</scope>
    <source>
        <strain>ATCC CRL-10679 / Arkansas</strain>
    </source>
</reference>
<proteinExistence type="inferred from homology"/>
<dbReference type="EC" id="3.4.25.2" evidence="1"/>
<dbReference type="EMBL" id="CP000236">
    <property type="protein sequence ID" value="ABD45277.1"/>
    <property type="molecule type" value="Genomic_DNA"/>
</dbReference>
<dbReference type="RefSeq" id="WP_011452938.1">
    <property type="nucleotide sequence ID" value="NC_007799.1"/>
</dbReference>
<dbReference type="SMR" id="Q2GFK0"/>
<dbReference type="STRING" id="205920.ECH_0996"/>
<dbReference type="MEROPS" id="T01.006"/>
<dbReference type="KEGG" id="ech:ECH_0996"/>
<dbReference type="eggNOG" id="COG5405">
    <property type="taxonomic scope" value="Bacteria"/>
</dbReference>
<dbReference type="HOGENOM" id="CLU_093872_1_0_5"/>
<dbReference type="OrthoDB" id="9804884at2"/>
<dbReference type="Proteomes" id="UP000008320">
    <property type="component" value="Chromosome"/>
</dbReference>
<dbReference type="GO" id="GO:0009376">
    <property type="term" value="C:HslUV protease complex"/>
    <property type="evidence" value="ECO:0007669"/>
    <property type="project" value="UniProtKB-UniRule"/>
</dbReference>
<dbReference type="GO" id="GO:0005839">
    <property type="term" value="C:proteasome core complex"/>
    <property type="evidence" value="ECO:0007669"/>
    <property type="project" value="InterPro"/>
</dbReference>
<dbReference type="GO" id="GO:0046872">
    <property type="term" value="F:metal ion binding"/>
    <property type="evidence" value="ECO:0007669"/>
    <property type="project" value="UniProtKB-KW"/>
</dbReference>
<dbReference type="GO" id="GO:0004298">
    <property type="term" value="F:threonine-type endopeptidase activity"/>
    <property type="evidence" value="ECO:0007669"/>
    <property type="project" value="UniProtKB-KW"/>
</dbReference>
<dbReference type="GO" id="GO:0051603">
    <property type="term" value="P:proteolysis involved in protein catabolic process"/>
    <property type="evidence" value="ECO:0007669"/>
    <property type="project" value="InterPro"/>
</dbReference>
<dbReference type="CDD" id="cd01913">
    <property type="entry name" value="protease_HslV"/>
    <property type="match status" value="1"/>
</dbReference>
<dbReference type="Gene3D" id="3.60.20.10">
    <property type="entry name" value="Glutamine Phosphoribosylpyrophosphate, subunit 1, domain 1"/>
    <property type="match status" value="1"/>
</dbReference>
<dbReference type="HAMAP" id="MF_00248">
    <property type="entry name" value="HslV"/>
    <property type="match status" value="1"/>
</dbReference>
<dbReference type="InterPro" id="IPR022281">
    <property type="entry name" value="ATP-dep_Prtase_HsIV_su"/>
</dbReference>
<dbReference type="InterPro" id="IPR029055">
    <property type="entry name" value="Ntn_hydrolases_N"/>
</dbReference>
<dbReference type="InterPro" id="IPR001353">
    <property type="entry name" value="Proteasome_sua/b"/>
</dbReference>
<dbReference type="InterPro" id="IPR023333">
    <property type="entry name" value="Proteasome_suB-type"/>
</dbReference>
<dbReference type="NCBIfam" id="TIGR03692">
    <property type="entry name" value="ATP_dep_HslV"/>
    <property type="match status" value="1"/>
</dbReference>
<dbReference type="NCBIfam" id="NF003964">
    <property type="entry name" value="PRK05456.1"/>
    <property type="match status" value="1"/>
</dbReference>
<dbReference type="PANTHER" id="PTHR32194:SF7">
    <property type="entry name" value="ATP-DEPENDENT PROTEASE SUBUNIT HSLV"/>
    <property type="match status" value="1"/>
</dbReference>
<dbReference type="PANTHER" id="PTHR32194">
    <property type="entry name" value="METALLOPROTEASE TLDD"/>
    <property type="match status" value="1"/>
</dbReference>
<dbReference type="Pfam" id="PF00227">
    <property type="entry name" value="Proteasome"/>
    <property type="match status" value="1"/>
</dbReference>
<dbReference type="PIRSF" id="PIRSF039093">
    <property type="entry name" value="HslV"/>
    <property type="match status" value="1"/>
</dbReference>
<dbReference type="SUPFAM" id="SSF56235">
    <property type="entry name" value="N-terminal nucleophile aminohydrolases (Ntn hydrolases)"/>
    <property type="match status" value="1"/>
</dbReference>
<dbReference type="PROSITE" id="PS51476">
    <property type="entry name" value="PROTEASOME_BETA_2"/>
    <property type="match status" value="1"/>
</dbReference>
<organism>
    <name type="scientific">Ehrlichia chaffeensis (strain ATCC CRL-10679 / Arkansas)</name>
    <dbReference type="NCBI Taxonomy" id="205920"/>
    <lineage>
        <taxon>Bacteria</taxon>
        <taxon>Pseudomonadati</taxon>
        <taxon>Pseudomonadota</taxon>
        <taxon>Alphaproteobacteria</taxon>
        <taxon>Rickettsiales</taxon>
        <taxon>Anaplasmataceae</taxon>
        <taxon>Ehrlichia</taxon>
    </lineage>
</organism>
<comment type="function">
    <text evidence="1">Protease subunit of a proteasome-like degradation complex believed to be a general protein degrading machinery.</text>
</comment>
<comment type="catalytic activity">
    <reaction evidence="1">
        <text>ATP-dependent cleavage of peptide bonds with broad specificity.</text>
        <dbReference type="EC" id="3.4.25.2"/>
    </reaction>
</comment>
<comment type="activity regulation">
    <text evidence="1">Allosterically activated by HslU binding.</text>
</comment>
<comment type="subunit">
    <text evidence="1">A double ring-shaped homohexamer of HslV is capped on each side by a ring-shaped HslU homohexamer. The assembly of the HslU/HslV complex is dependent on binding of ATP.</text>
</comment>
<comment type="subcellular location">
    <subcellularLocation>
        <location evidence="1">Cytoplasm</location>
    </subcellularLocation>
</comment>
<comment type="similarity">
    <text evidence="1">Belongs to the peptidase T1B family. HslV subfamily.</text>
</comment>
<sequence length="189" mass="20718">MEHKDNSTMYGTTILCIRRGNKVIIAGDGQVSLGHTVIKNSAKKIKRLANDTVITGFAGATADAFTLFERLESKLEKHPGQLLRACVELAKDWRMDRYLRRLEAMMIVADKSVSLIISGNGDVLEPENGIAAIGSGGNYALAAAKALCESNDQFSQNMTLEYIITTAMKIASEICIYTNNNIIMEKIED</sequence>
<keyword id="KW-0021">Allosteric enzyme</keyword>
<keyword id="KW-0963">Cytoplasm</keyword>
<keyword id="KW-0378">Hydrolase</keyword>
<keyword id="KW-0479">Metal-binding</keyword>
<keyword id="KW-0645">Protease</keyword>
<keyword id="KW-1185">Reference proteome</keyword>
<keyword id="KW-0915">Sodium</keyword>
<keyword id="KW-0888">Threonine protease</keyword>
<protein>
    <recommendedName>
        <fullName evidence="1">ATP-dependent protease subunit HslV</fullName>
        <ecNumber evidence="1">3.4.25.2</ecNumber>
    </recommendedName>
</protein>
<evidence type="ECO:0000255" key="1">
    <source>
        <dbReference type="HAMAP-Rule" id="MF_00248"/>
    </source>
</evidence>
<feature type="chain" id="PRO_1000012609" description="ATP-dependent protease subunit HslV">
    <location>
        <begin position="1"/>
        <end position="189"/>
    </location>
</feature>
<feature type="active site" evidence="1">
    <location>
        <position position="12"/>
    </location>
</feature>
<feature type="binding site" evidence="1">
    <location>
        <position position="172"/>
    </location>
    <ligand>
        <name>Na(+)</name>
        <dbReference type="ChEBI" id="CHEBI:29101"/>
    </ligand>
</feature>
<feature type="binding site" evidence="1">
    <location>
        <position position="175"/>
    </location>
    <ligand>
        <name>Na(+)</name>
        <dbReference type="ChEBI" id="CHEBI:29101"/>
    </ligand>
</feature>
<feature type="binding site" evidence="1">
    <location>
        <position position="178"/>
    </location>
    <ligand>
        <name>Na(+)</name>
        <dbReference type="ChEBI" id="CHEBI:29101"/>
    </ligand>
</feature>
<name>HSLV_EHRCR</name>
<gene>
    <name evidence="1" type="primary">hslV</name>
    <name type="ordered locus">ECH_0996</name>
</gene>
<accession>Q2GFK0</accession>